<organism>
    <name type="scientific">Xylella fastidiosa (strain M12)</name>
    <dbReference type="NCBI Taxonomy" id="405440"/>
    <lineage>
        <taxon>Bacteria</taxon>
        <taxon>Pseudomonadati</taxon>
        <taxon>Pseudomonadota</taxon>
        <taxon>Gammaproteobacteria</taxon>
        <taxon>Lysobacterales</taxon>
        <taxon>Lysobacteraceae</taxon>
        <taxon>Xylella</taxon>
    </lineage>
</organism>
<accession>B0U568</accession>
<name>GREA_XYLFM</name>
<feature type="chain" id="PRO_1000094210" description="Transcription elongation factor GreA">
    <location>
        <begin position="1"/>
        <end position="158"/>
    </location>
</feature>
<feature type="coiled-coil region" evidence="1">
    <location>
        <begin position="45"/>
        <end position="72"/>
    </location>
</feature>
<evidence type="ECO:0000255" key="1">
    <source>
        <dbReference type="HAMAP-Rule" id="MF_00105"/>
    </source>
</evidence>
<reference key="1">
    <citation type="journal article" date="2010" name="J. Bacteriol.">
        <title>Whole genome sequences of two Xylella fastidiosa strains (M12 and M23) causing almond leaf scorch disease in California.</title>
        <authorList>
            <person name="Chen J."/>
            <person name="Xie G."/>
            <person name="Han S."/>
            <person name="Chertkov O."/>
            <person name="Sims D."/>
            <person name="Civerolo E.L."/>
        </authorList>
    </citation>
    <scope>NUCLEOTIDE SEQUENCE [LARGE SCALE GENOMIC DNA]</scope>
    <source>
        <strain>M12</strain>
    </source>
</reference>
<comment type="function">
    <text evidence="1">Necessary for efficient RNA polymerase transcription elongation past template-encoded arresting sites. The arresting sites in DNA have the property of trapping a certain fraction of elongating RNA polymerases that pass through, resulting in locked ternary complexes. Cleavage of the nascent transcript by cleavage factors such as GreA or GreB allows the resumption of elongation from the new 3'terminus. GreA releases sequences of 2 to 3 nucleotides.</text>
</comment>
<comment type="similarity">
    <text evidence="1">Belongs to the GreA/GreB family.</text>
</comment>
<protein>
    <recommendedName>
        <fullName evidence="1">Transcription elongation factor GreA</fullName>
    </recommendedName>
    <alternativeName>
        <fullName evidence="1">Transcript cleavage factor GreA</fullName>
    </alternativeName>
</protein>
<dbReference type="EMBL" id="CP000941">
    <property type="protein sequence ID" value="ACA11464.1"/>
    <property type="molecule type" value="Genomic_DNA"/>
</dbReference>
<dbReference type="SMR" id="B0U568"/>
<dbReference type="KEGG" id="xfm:Xfasm12_0453"/>
<dbReference type="HOGENOM" id="CLU_101379_2_0_6"/>
<dbReference type="GO" id="GO:0003677">
    <property type="term" value="F:DNA binding"/>
    <property type="evidence" value="ECO:0007669"/>
    <property type="project" value="UniProtKB-UniRule"/>
</dbReference>
<dbReference type="GO" id="GO:0070063">
    <property type="term" value="F:RNA polymerase binding"/>
    <property type="evidence" value="ECO:0007669"/>
    <property type="project" value="InterPro"/>
</dbReference>
<dbReference type="GO" id="GO:0006354">
    <property type="term" value="P:DNA-templated transcription elongation"/>
    <property type="evidence" value="ECO:0007669"/>
    <property type="project" value="TreeGrafter"/>
</dbReference>
<dbReference type="GO" id="GO:0032784">
    <property type="term" value="P:regulation of DNA-templated transcription elongation"/>
    <property type="evidence" value="ECO:0007669"/>
    <property type="project" value="UniProtKB-UniRule"/>
</dbReference>
<dbReference type="FunFam" id="1.10.287.180:FF:000001">
    <property type="entry name" value="Transcription elongation factor GreA"/>
    <property type="match status" value="1"/>
</dbReference>
<dbReference type="FunFam" id="3.10.50.30:FF:000001">
    <property type="entry name" value="Transcription elongation factor GreA"/>
    <property type="match status" value="1"/>
</dbReference>
<dbReference type="Gene3D" id="3.10.50.30">
    <property type="entry name" value="Transcription elongation factor, GreA/GreB, C-terminal domain"/>
    <property type="match status" value="1"/>
</dbReference>
<dbReference type="Gene3D" id="1.10.287.180">
    <property type="entry name" value="Transcription elongation factor, GreA/GreB, N-terminal domain"/>
    <property type="match status" value="1"/>
</dbReference>
<dbReference type="HAMAP" id="MF_00105">
    <property type="entry name" value="GreA_GreB"/>
    <property type="match status" value="1"/>
</dbReference>
<dbReference type="InterPro" id="IPR036953">
    <property type="entry name" value="GreA/GreB_C_sf"/>
</dbReference>
<dbReference type="InterPro" id="IPR018151">
    <property type="entry name" value="TF_GreA/GreB_CS"/>
</dbReference>
<dbReference type="InterPro" id="IPR006359">
    <property type="entry name" value="Tscrpt_elong_fac_GreA"/>
</dbReference>
<dbReference type="InterPro" id="IPR028624">
    <property type="entry name" value="Tscrpt_elong_fac_GreA/B"/>
</dbReference>
<dbReference type="InterPro" id="IPR001437">
    <property type="entry name" value="Tscrpt_elong_fac_GreA/B_C"/>
</dbReference>
<dbReference type="InterPro" id="IPR023459">
    <property type="entry name" value="Tscrpt_elong_fac_GreA/B_fam"/>
</dbReference>
<dbReference type="InterPro" id="IPR022691">
    <property type="entry name" value="Tscrpt_elong_fac_GreA/B_N"/>
</dbReference>
<dbReference type="InterPro" id="IPR036805">
    <property type="entry name" value="Tscrpt_elong_fac_GreA/B_N_sf"/>
</dbReference>
<dbReference type="NCBIfam" id="TIGR01462">
    <property type="entry name" value="greA"/>
    <property type="match status" value="1"/>
</dbReference>
<dbReference type="NCBIfam" id="NF001261">
    <property type="entry name" value="PRK00226.1-2"/>
    <property type="match status" value="1"/>
</dbReference>
<dbReference type="NCBIfam" id="NF001263">
    <property type="entry name" value="PRK00226.1-4"/>
    <property type="match status" value="1"/>
</dbReference>
<dbReference type="NCBIfam" id="NF001264">
    <property type="entry name" value="PRK00226.1-5"/>
    <property type="match status" value="1"/>
</dbReference>
<dbReference type="PANTHER" id="PTHR30437">
    <property type="entry name" value="TRANSCRIPTION ELONGATION FACTOR GREA"/>
    <property type="match status" value="1"/>
</dbReference>
<dbReference type="PANTHER" id="PTHR30437:SF4">
    <property type="entry name" value="TRANSCRIPTION ELONGATION FACTOR GREA"/>
    <property type="match status" value="1"/>
</dbReference>
<dbReference type="Pfam" id="PF01272">
    <property type="entry name" value="GreA_GreB"/>
    <property type="match status" value="1"/>
</dbReference>
<dbReference type="Pfam" id="PF03449">
    <property type="entry name" value="GreA_GreB_N"/>
    <property type="match status" value="1"/>
</dbReference>
<dbReference type="PIRSF" id="PIRSF006092">
    <property type="entry name" value="GreA_GreB"/>
    <property type="match status" value="1"/>
</dbReference>
<dbReference type="SUPFAM" id="SSF54534">
    <property type="entry name" value="FKBP-like"/>
    <property type="match status" value="1"/>
</dbReference>
<dbReference type="SUPFAM" id="SSF46557">
    <property type="entry name" value="GreA transcript cleavage protein, N-terminal domain"/>
    <property type="match status" value="1"/>
</dbReference>
<dbReference type="PROSITE" id="PS00829">
    <property type="entry name" value="GREAB_1"/>
    <property type="match status" value="1"/>
</dbReference>
<keyword id="KW-0175">Coiled coil</keyword>
<keyword id="KW-0238">DNA-binding</keyword>
<keyword id="KW-0804">Transcription</keyword>
<keyword id="KW-0805">Transcription regulation</keyword>
<proteinExistence type="inferred from homology"/>
<gene>
    <name evidence="1" type="primary">greA</name>
    <name type="ordered locus">Xfasm12_0453</name>
</gene>
<sequence>MRPPMTLKGVRRLRDELEHLKLVKRPEIINAIAEARAHGDLKENAEYHAAREQQSFIEGRIKQLEGELSHAEVIDVAKLNAGTKIVFGATVTLADLGTDEESRYQIVGDLEADIKQGLVAISSPVARALIGKQEGDTIVIEAPAGRREYEVVAVEYIS</sequence>